<protein>
    <recommendedName>
        <fullName evidence="1">tRNA uridine 5-carboxymethylaminomethyl modification enzyme MnmG</fullName>
    </recommendedName>
    <alternativeName>
        <fullName evidence="1">Glucose-inhibited division protein A</fullName>
    </alternativeName>
</protein>
<accession>A8YTQ6</accession>
<gene>
    <name evidence="1" type="primary">mnmG</name>
    <name evidence="1" type="synonym">gidA</name>
    <name type="ordered locus">lhv_2103</name>
</gene>
<dbReference type="EMBL" id="CP000517">
    <property type="protein sequence ID" value="ABX27880.1"/>
    <property type="molecule type" value="Genomic_DNA"/>
</dbReference>
<dbReference type="RefSeq" id="WP_012212406.1">
    <property type="nucleotide sequence ID" value="NC_010080.1"/>
</dbReference>
<dbReference type="SMR" id="A8YTQ6"/>
<dbReference type="KEGG" id="lhe:lhv_2103"/>
<dbReference type="eggNOG" id="COG0445">
    <property type="taxonomic scope" value="Bacteria"/>
</dbReference>
<dbReference type="HOGENOM" id="CLU_007831_2_2_9"/>
<dbReference type="Proteomes" id="UP000000790">
    <property type="component" value="Chromosome"/>
</dbReference>
<dbReference type="GO" id="GO:0005829">
    <property type="term" value="C:cytosol"/>
    <property type="evidence" value="ECO:0007669"/>
    <property type="project" value="TreeGrafter"/>
</dbReference>
<dbReference type="GO" id="GO:0050660">
    <property type="term" value="F:flavin adenine dinucleotide binding"/>
    <property type="evidence" value="ECO:0007669"/>
    <property type="project" value="UniProtKB-UniRule"/>
</dbReference>
<dbReference type="GO" id="GO:0030488">
    <property type="term" value="P:tRNA methylation"/>
    <property type="evidence" value="ECO:0007669"/>
    <property type="project" value="TreeGrafter"/>
</dbReference>
<dbReference type="GO" id="GO:0002098">
    <property type="term" value="P:tRNA wobble uridine modification"/>
    <property type="evidence" value="ECO:0007669"/>
    <property type="project" value="InterPro"/>
</dbReference>
<dbReference type="FunFam" id="1.10.10.1800:FF:000001">
    <property type="entry name" value="tRNA uridine 5-carboxymethylaminomethyl modification enzyme MnmG"/>
    <property type="match status" value="1"/>
</dbReference>
<dbReference type="FunFam" id="1.10.150.570:FF:000001">
    <property type="entry name" value="tRNA uridine 5-carboxymethylaminomethyl modification enzyme MnmG"/>
    <property type="match status" value="1"/>
</dbReference>
<dbReference type="FunFam" id="3.50.50.60:FF:000002">
    <property type="entry name" value="tRNA uridine 5-carboxymethylaminomethyl modification enzyme MnmG"/>
    <property type="match status" value="1"/>
</dbReference>
<dbReference type="FunFam" id="3.50.50.60:FF:000063">
    <property type="entry name" value="tRNA uridine 5-carboxymethylaminomethyl modification enzyme MnmG"/>
    <property type="match status" value="1"/>
</dbReference>
<dbReference type="Gene3D" id="3.50.50.60">
    <property type="entry name" value="FAD/NAD(P)-binding domain"/>
    <property type="match status" value="2"/>
</dbReference>
<dbReference type="Gene3D" id="1.10.150.570">
    <property type="entry name" value="GidA associated domain, C-terminal subdomain"/>
    <property type="match status" value="1"/>
</dbReference>
<dbReference type="Gene3D" id="1.10.10.1800">
    <property type="entry name" value="tRNA uridine 5-carboxymethylaminomethyl modification enzyme MnmG/GidA"/>
    <property type="match status" value="1"/>
</dbReference>
<dbReference type="HAMAP" id="MF_00129">
    <property type="entry name" value="MnmG_GidA"/>
    <property type="match status" value="1"/>
</dbReference>
<dbReference type="InterPro" id="IPR036188">
    <property type="entry name" value="FAD/NAD-bd_sf"/>
</dbReference>
<dbReference type="InterPro" id="IPR049312">
    <property type="entry name" value="GIDA_C_N"/>
</dbReference>
<dbReference type="InterPro" id="IPR004416">
    <property type="entry name" value="MnmG"/>
</dbReference>
<dbReference type="InterPro" id="IPR002218">
    <property type="entry name" value="MnmG-rel"/>
</dbReference>
<dbReference type="InterPro" id="IPR020595">
    <property type="entry name" value="MnmG-rel_CS"/>
</dbReference>
<dbReference type="InterPro" id="IPR026904">
    <property type="entry name" value="MnmG_C"/>
</dbReference>
<dbReference type="InterPro" id="IPR047001">
    <property type="entry name" value="MnmG_C_subdom"/>
</dbReference>
<dbReference type="InterPro" id="IPR044920">
    <property type="entry name" value="MnmG_C_subdom_sf"/>
</dbReference>
<dbReference type="InterPro" id="IPR040131">
    <property type="entry name" value="MnmG_N"/>
</dbReference>
<dbReference type="NCBIfam" id="TIGR00136">
    <property type="entry name" value="mnmG_gidA"/>
    <property type="match status" value="1"/>
</dbReference>
<dbReference type="PANTHER" id="PTHR11806">
    <property type="entry name" value="GLUCOSE INHIBITED DIVISION PROTEIN A"/>
    <property type="match status" value="1"/>
</dbReference>
<dbReference type="PANTHER" id="PTHR11806:SF0">
    <property type="entry name" value="PROTEIN MTO1 HOMOLOG, MITOCHONDRIAL"/>
    <property type="match status" value="1"/>
</dbReference>
<dbReference type="Pfam" id="PF01134">
    <property type="entry name" value="GIDA"/>
    <property type="match status" value="1"/>
</dbReference>
<dbReference type="Pfam" id="PF21680">
    <property type="entry name" value="GIDA_C_1st"/>
    <property type="match status" value="1"/>
</dbReference>
<dbReference type="Pfam" id="PF13932">
    <property type="entry name" value="SAM_GIDA_C"/>
    <property type="match status" value="1"/>
</dbReference>
<dbReference type="PRINTS" id="PR00368">
    <property type="entry name" value="FADPNR"/>
</dbReference>
<dbReference type="PRINTS" id="PR00411">
    <property type="entry name" value="PNDRDTASEI"/>
</dbReference>
<dbReference type="SMART" id="SM01228">
    <property type="entry name" value="GIDA_assoc_3"/>
    <property type="match status" value="1"/>
</dbReference>
<dbReference type="SUPFAM" id="SSF51905">
    <property type="entry name" value="FAD/NAD(P)-binding domain"/>
    <property type="match status" value="1"/>
</dbReference>
<dbReference type="PROSITE" id="PS01280">
    <property type="entry name" value="GIDA_1"/>
    <property type="match status" value="1"/>
</dbReference>
<dbReference type="PROSITE" id="PS01281">
    <property type="entry name" value="GIDA_2"/>
    <property type="match status" value="1"/>
</dbReference>
<feature type="chain" id="PRO_0000345286" description="tRNA uridine 5-carboxymethylaminomethyl modification enzyme MnmG">
    <location>
        <begin position="1"/>
        <end position="661"/>
    </location>
</feature>
<feature type="region of interest" description="Disordered" evidence="2">
    <location>
        <begin position="206"/>
        <end position="230"/>
    </location>
</feature>
<feature type="compositionally biased region" description="Basic and acidic residues" evidence="2">
    <location>
        <begin position="216"/>
        <end position="230"/>
    </location>
</feature>
<feature type="binding site" evidence="1">
    <location>
        <begin position="16"/>
        <end position="21"/>
    </location>
    <ligand>
        <name>FAD</name>
        <dbReference type="ChEBI" id="CHEBI:57692"/>
    </ligand>
</feature>
<feature type="binding site" evidence="1">
    <location>
        <position position="128"/>
    </location>
    <ligand>
        <name>FAD</name>
        <dbReference type="ChEBI" id="CHEBI:57692"/>
    </ligand>
</feature>
<feature type="binding site" evidence="1">
    <location>
        <position position="183"/>
    </location>
    <ligand>
        <name>FAD</name>
        <dbReference type="ChEBI" id="CHEBI:57692"/>
    </ligand>
</feature>
<feature type="binding site" evidence="1">
    <location>
        <begin position="277"/>
        <end position="291"/>
    </location>
    <ligand>
        <name>NAD(+)</name>
        <dbReference type="ChEBI" id="CHEBI:57540"/>
    </ligand>
</feature>
<feature type="binding site" evidence="1">
    <location>
        <position position="374"/>
    </location>
    <ligand>
        <name>FAD</name>
        <dbReference type="ChEBI" id="CHEBI:57692"/>
    </ligand>
</feature>
<keyword id="KW-0963">Cytoplasm</keyword>
<keyword id="KW-0274">FAD</keyword>
<keyword id="KW-0285">Flavoprotein</keyword>
<keyword id="KW-0520">NAD</keyword>
<keyword id="KW-0819">tRNA processing</keyword>
<sequence>MIKTYDSNEYDVIVVGAGHAGCEAALASAHMGQKTLLVTIGLDMVAFMPCNPSVGGPAKGTVVREIDALGGQMGKNIDATYIQMRMLNTGKGPAVRALRAQADKWQYHEHMKDTIENTPNLTLRQAIVDQLVVEDGVCKGVITNTGAKYHAKSVVLTTGTAARGKIIIGELTYSSGPNNTTPSIKLSENLEKLGFKLRRFKTGTPPRVNGNTIDYSKTEEEPGDKTPRHFSYESKDVDYLKNQISCWMTYTNNGTHEIIRENLNRAPMFSGIIKGVGPRYCPSIEDKVVRFADKDRHQIFLEPEGRTTKEVYVGDFSTSMPEEIQLKMVHSVAGLEHAEMMRPGYAIEYDVVEPWQLKHTLETKNIKHLFTAGQMNGTSGYEEAAGQGLIAGINAALSAQDKPGFTLGRNDAYIGVLIDDLVTKGTNEPYRLLTSRAEYRLILRHDNADLRLTEYGHELGLISDERYEKFEEKKQAIRDAKERLHEITVHLSDDVQEFLKSIGQEPMKAGVKADVFLRRPNVKIADIERLTGEKIPGDRYVKEQVEIGIKYAGYIKKEETRIARLKRQEAKKIPADIDYEMIEGLATEARQKFEKIRPETLAQAERISGVNPADLAILSVYIQNGRYSKVKKYEAEDLKPSSYFAEKYGLEADAETGASQY</sequence>
<name>MNMG_LACH4</name>
<reference key="1">
    <citation type="journal article" date="2008" name="J. Bacteriol.">
        <title>Genome sequence of Lactobacillus helveticus: an organism distinguished by selective gene loss and IS element expansion.</title>
        <authorList>
            <person name="Callanan M."/>
            <person name="Kaleta P."/>
            <person name="O'Callaghan J."/>
            <person name="O'Sullivan O."/>
            <person name="Jordan K."/>
            <person name="McAuliffe O."/>
            <person name="Sangrador-Vegas A."/>
            <person name="Slattery L."/>
            <person name="Fitzgerald G.F."/>
            <person name="Beresford T."/>
            <person name="Ross R.P."/>
        </authorList>
    </citation>
    <scope>NUCLEOTIDE SEQUENCE [LARGE SCALE GENOMIC DNA]</scope>
    <source>
        <strain>DPC 4571</strain>
    </source>
</reference>
<evidence type="ECO:0000255" key="1">
    <source>
        <dbReference type="HAMAP-Rule" id="MF_00129"/>
    </source>
</evidence>
<evidence type="ECO:0000256" key="2">
    <source>
        <dbReference type="SAM" id="MobiDB-lite"/>
    </source>
</evidence>
<proteinExistence type="inferred from homology"/>
<comment type="function">
    <text evidence="1">NAD-binding protein involved in the addition of a carboxymethylaminomethyl (cmnm) group at the wobble position (U34) of certain tRNAs, forming tRNA-cmnm(5)s(2)U34.</text>
</comment>
<comment type="cofactor">
    <cofactor evidence="1">
        <name>FAD</name>
        <dbReference type="ChEBI" id="CHEBI:57692"/>
    </cofactor>
</comment>
<comment type="subunit">
    <text evidence="1">Homodimer. Heterotetramer of two MnmE and two MnmG subunits.</text>
</comment>
<comment type="subcellular location">
    <subcellularLocation>
        <location evidence="1">Cytoplasm</location>
    </subcellularLocation>
</comment>
<comment type="similarity">
    <text evidence="1">Belongs to the MnmG family.</text>
</comment>
<organism>
    <name type="scientific">Lactobacillus helveticus (strain DPC 4571)</name>
    <dbReference type="NCBI Taxonomy" id="405566"/>
    <lineage>
        <taxon>Bacteria</taxon>
        <taxon>Bacillati</taxon>
        <taxon>Bacillota</taxon>
        <taxon>Bacilli</taxon>
        <taxon>Lactobacillales</taxon>
        <taxon>Lactobacillaceae</taxon>
        <taxon>Lactobacillus</taxon>
    </lineage>
</organism>